<comment type="function">
    <text evidence="1">Binds to the 23S rRNA.</text>
</comment>
<comment type="subunit">
    <text evidence="1">Part of the 50S ribosomal subunit.</text>
</comment>
<comment type="similarity">
    <text evidence="1">Belongs to the universal ribosomal protein uL15 family.</text>
</comment>
<gene>
    <name evidence="1" type="primary">rplO</name>
    <name type="ordered locus">NE0420</name>
</gene>
<name>RL15_NITEU</name>
<dbReference type="EMBL" id="AL954747">
    <property type="protein sequence ID" value="CAD84331.1"/>
    <property type="molecule type" value="Genomic_DNA"/>
</dbReference>
<dbReference type="RefSeq" id="WP_011111055.1">
    <property type="nucleotide sequence ID" value="NC_004757.1"/>
</dbReference>
<dbReference type="SMR" id="Q82X73"/>
<dbReference type="STRING" id="228410.NE0420"/>
<dbReference type="GeneID" id="87103627"/>
<dbReference type="KEGG" id="neu:NE0420"/>
<dbReference type="eggNOG" id="COG0200">
    <property type="taxonomic scope" value="Bacteria"/>
</dbReference>
<dbReference type="HOGENOM" id="CLU_055188_4_2_4"/>
<dbReference type="OrthoDB" id="9810293at2"/>
<dbReference type="PhylomeDB" id="Q82X73"/>
<dbReference type="Proteomes" id="UP000001416">
    <property type="component" value="Chromosome"/>
</dbReference>
<dbReference type="GO" id="GO:0022625">
    <property type="term" value="C:cytosolic large ribosomal subunit"/>
    <property type="evidence" value="ECO:0007669"/>
    <property type="project" value="TreeGrafter"/>
</dbReference>
<dbReference type="GO" id="GO:0019843">
    <property type="term" value="F:rRNA binding"/>
    <property type="evidence" value="ECO:0007669"/>
    <property type="project" value="UniProtKB-UniRule"/>
</dbReference>
<dbReference type="GO" id="GO:0003735">
    <property type="term" value="F:structural constituent of ribosome"/>
    <property type="evidence" value="ECO:0007669"/>
    <property type="project" value="InterPro"/>
</dbReference>
<dbReference type="GO" id="GO:0006412">
    <property type="term" value="P:translation"/>
    <property type="evidence" value="ECO:0007669"/>
    <property type="project" value="UniProtKB-UniRule"/>
</dbReference>
<dbReference type="Gene3D" id="3.100.10.10">
    <property type="match status" value="1"/>
</dbReference>
<dbReference type="HAMAP" id="MF_01341">
    <property type="entry name" value="Ribosomal_uL15"/>
    <property type="match status" value="1"/>
</dbReference>
<dbReference type="InterPro" id="IPR030878">
    <property type="entry name" value="Ribosomal_uL15"/>
</dbReference>
<dbReference type="InterPro" id="IPR021131">
    <property type="entry name" value="Ribosomal_uL15/eL18"/>
</dbReference>
<dbReference type="InterPro" id="IPR036227">
    <property type="entry name" value="Ribosomal_uL15/eL18_sf"/>
</dbReference>
<dbReference type="InterPro" id="IPR005749">
    <property type="entry name" value="Ribosomal_uL15_bac-type"/>
</dbReference>
<dbReference type="NCBIfam" id="TIGR01071">
    <property type="entry name" value="rplO_bact"/>
    <property type="match status" value="1"/>
</dbReference>
<dbReference type="PANTHER" id="PTHR12934">
    <property type="entry name" value="50S RIBOSOMAL PROTEIN L15"/>
    <property type="match status" value="1"/>
</dbReference>
<dbReference type="PANTHER" id="PTHR12934:SF11">
    <property type="entry name" value="LARGE RIBOSOMAL SUBUNIT PROTEIN UL15M"/>
    <property type="match status" value="1"/>
</dbReference>
<dbReference type="Pfam" id="PF00828">
    <property type="entry name" value="Ribosomal_L27A"/>
    <property type="match status" value="1"/>
</dbReference>
<dbReference type="SUPFAM" id="SSF52080">
    <property type="entry name" value="Ribosomal proteins L15p and L18e"/>
    <property type="match status" value="1"/>
</dbReference>
<sequence length="153" mass="16664">MKLNTIKPGIGSAKPKRRVGRGIGSGLGKTCGRGHKGQKSRAGGFHKVGFEGGQMPLQRRLPKRGFTVYGKKQVREIKLSTLQLIDLSEFNPSVLYDHGLIKNINDPVKIILGNQLIKRAIKIKDLIISRGAKEAVEQMGGLVELTVKDVNGV</sequence>
<proteinExistence type="inferred from homology"/>
<organism>
    <name type="scientific">Nitrosomonas europaea (strain ATCC 19718 / CIP 103999 / KCTC 2705 / NBRC 14298)</name>
    <dbReference type="NCBI Taxonomy" id="228410"/>
    <lineage>
        <taxon>Bacteria</taxon>
        <taxon>Pseudomonadati</taxon>
        <taxon>Pseudomonadota</taxon>
        <taxon>Betaproteobacteria</taxon>
        <taxon>Nitrosomonadales</taxon>
        <taxon>Nitrosomonadaceae</taxon>
        <taxon>Nitrosomonas</taxon>
    </lineage>
</organism>
<evidence type="ECO:0000255" key="1">
    <source>
        <dbReference type="HAMAP-Rule" id="MF_01341"/>
    </source>
</evidence>
<evidence type="ECO:0000256" key="2">
    <source>
        <dbReference type="SAM" id="MobiDB-lite"/>
    </source>
</evidence>
<evidence type="ECO:0000305" key="3"/>
<accession>Q82X73</accession>
<feature type="chain" id="PRO_0000104771" description="Large ribosomal subunit protein uL15">
    <location>
        <begin position="1"/>
        <end position="153"/>
    </location>
</feature>
<feature type="region of interest" description="Disordered" evidence="2">
    <location>
        <begin position="1"/>
        <end position="42"/>
    </location>
</feature>
<feature type="compositionally biased region" description="Gly residues" evidence="2">
    <location>
        <begin position="21"/>
        <end position="31"/>
    </location>
</feature>
<keyword id="KW-1185">Reference proteome</keyword>
<keyword id="KW-0687">Ribonucleoprotein</keyword>
<keyword id="KW-0689">Ribosomal protein</keyword>
<keyword id="KW-0694">RNA-binding</keyword>
<keyword id="KW-0699">rRNA-binding</keyword>
<protein>
    <recommendedName>
        <fullName evidence="1">Large ribosomal subunit protein uL15</fullName>
    </recommendedName>
    <alternativeName>
        <fullName evidence="3">50S ribosomal protein L15</fullName>
    </alternativeName>
</protein>
<reference key="1">
    <citation type="journal article" date="2003" name="J. Bacteriol.">
        <title>Complete genome sequence of the ammonia-oxidizing bacterium and obligate chemolithoautotroph Nitrosomonas europaea.</title>
        <authorList>
            <person name="Chain P."/>
            <person name="Lamerdin J.E."/>
            <person name="Larimer F.W."/>
            <person name="Regala W."/>
            <person name="Lao V."/>
            <person name="Land M.L."/>
            <person name="Hauser L."/>
            <person name="Hooper A.B."/>
            <person name="Klotz M.G."/>
            <person name="Norton J."/>
            <person name="Sayavedra-Soto L.A."/>
            <person name="Arciero D.M."/>
            <person name="Hommes N.G."/>
            <person name="Whittaker M.M."/>
            <person name="Arp D.J."/>
        </authorList>
    </citation>
    <scope>NUCLEOTIDE SEQUENCE [LARGE SCALE GENOMIC DNA]</scope>
    <source>
        <strain>ATCC 19718 / CIP 103999 / KCTC 2705 / NBRC 14298</strain>
    </source>
</reference>